<protein>
    <recommendedName>
        <fullName>Prostacyclin receptor</fullName>
    </recommendedName>
    <alternativeName>
        <fullName>Prostaglandin I2 receptor</fullName>
        <shortName>PGI receptor</shortName>
        <shortName>PGI2 receptor</shortName>
    </alternativeName>
    <alternativeName>
        <fullName>Prostanoid IP receptor</fullName>
    </alternativeName>
</protein>
<gene>
    <name type="primary">PTGIR</name>
    <name type="synonym">PRIPR</name>
</gene>
<organism>
    <name type="scientific">Homo sapiens</name>
    <name type="common">Human</name>
    <dbReference type="NCBI Taxonomy" id="9606"/>
    <lineage>
        <taxon>Eukaryota</taxon>
        <taxon>Metazoa</taxon>
        <taxon>Chordata</taxon>
        <taxon>Craniata</taxon>
        <taxon>Vertebrata</taxon>
        <taxon>Euteleostomi</taxon>
        <taxon>Mammalia</taxon>
        <taxon>Eutheria</taxon>
        <taxon>Euarchontoglires</taxon>
        <taxon>Primates</taxon>
        <taxon>Haplorrhini</taxon>
        <taxon>Catarrhini</taxon>
        <taxon>Hominidae</taxon>
        <taxon>Homo</taxon>
    </lineage>
</organism>
<keyword id="KW-0002">3D-structure</keyword>
<keyword id="KW-1003">Cell membrane</keyword>
<keyword id="KW-1015">Disulfide bond</keyword>
<keyword id="KW-0297">G-protein coupled receptor</keyword>
<keyword id="KW-0325">Glycoprotein</keyword>
<keyword id="KW-0449">Lipoprotein</keyword>
<keyword id="KW-0472">Membrane</keyword>
<keyword id="KW-0488">Methylation</keyword>
<keyword id="KW-0636">Prenylation</keyword>
<keyword id="KW-1267">Proteomics identification</keyword>
<keyword id="KW-0675">Receptor</keyword>
<keyword id="KW-1185">Reference proteome</keyword>
<keyword id="KW-0807">Transducer</keyword>
<keyword id="KW-0812">Transmembrane</keyword>
<keyword id="KW-1133">Transmembrane helix</keyword>
<comment type="function">
    <text>Receptor for prostacyclin (prostaglandin I2 or PGI2). The activity of this receptor is mediated by G(s) proteins which activate adenylate cyclase.</text>
</comment>
<comment type="subunit">
    <text evidence="1">Interacts (non-isoprenylated C-terminus) with PDZK1.</text>
</comment>
<comment type="subcellular location">
    <subcellularLocation>
        <location>Cell membrane</location>
        <topology>Multi-pass membrane protein</topology>
    </subcellularLocation>
</comment>
<comment type="PTM">
    <text evidence="5">Isoprenylation does not influence ligand binding but is required for efficient coupling to the effectors adenylyl cyclase and phospholipase C.</text>
</comment>
<comment type="similarity">
    <text evidence="3">Belongs to the G-protein coupled receptor 1 family.</text>
</comment>
<comment type="caution">
    <text evidence="6 9">Palmitoylation of either Cys-308 or Cys-311 was reported to be sufficient to maintain functional coupling to G(s) proteins and signaling (PubMed:12488443). However, this publication was retracted due to figure duplication.</text>
</comment>
<reference key="1">
    <citation type="journal article" date="1994" name="J. Biol. Chem.">
        <title>Cloning and expression of a cDNA for the human prostanoid IP receptor.</title>
        <authorList>
            <person name="Boie Y."/>
            <person name="Rushmore T.H."/>
            <person name="Darmon-Goodwin A."/>
            <person name="Grygorczyk R."/>
            <person name="Slipetz D.M."/>
            <person name="Metters K.M."/>
            <person name="Abramovitz M."/>
        </authorList>
    </citation>
    <scope>NUCLEOTIDE SEQUENCE [MRNA]</scope>
    <source>
        <tissue>Lung</tissue>
    </source>
</reference>
<reference key="2">
    <citation type="journal article" date="1994" name="FEBS Lett.">
        <title>Cloning and expression of a cDNA for the human prostacyclin receptor.</title>
        <authorList>
            <person name="Katsuyama M."/>
            <person name="Sugimoto Y."/>
            <person name="Namba T."/>
            <person name="Irie A."/>
            <person name="Negishi M."/>
            <person name="Narumiya S."/>
            <person name="Ichikawa A."/>
        </authorList>
    </citation>
    <scope>NUCLEOTIDE SEQUENCE [MRNA]</scope>
</reference>
<reference key="3">
    <citation type="journal article" date="1994" name="Circulation">
        <title>Molecular cloning of human prostacyclin receptor cDNA and its gene expression in the cardiovascular system.</title>
        <authorList>
            <person name="Nakagawa O."/>
            <person name="Tanaka I."/>
            <person name="Usui T."/>
            <person name="Harada M."/>
            <person name="Sasaki Y."/>
            <person name="Itoh H."/>
            <person name="Yoshimasa T."/>
            <person name="Namba T."/>
            <person name="Narumiya S."/>
            <person name="Nakao K."/>
        </authorList>
    </citation>
    <scope>NUCLEOTIDE SEQUENCE [MRNA]</scope>
    <source>
        <tissue>Lung</tissue>
    </source>
</reference>
<reference key="4">
    <citation type="journal article" date="1995" name="Genomics">
        <title>Structural organization and chromosomal assignment of the human prostacyclin receptor gene.</title>
        <authorList>
            <person name="Ogawa Y."/>
            <person name="Tanaka I."/>
            <person name="Inoue M."/>
            <person name="Yoshitake Y."/>
            <person name="Isse N."/>
            <person name="Nakagawa O."/>
            <person name="Usui T."/>
            <person name="Itoh H."/>
            <person name="Yoshimasa T."/>
            <person name="Narumiya S."/>
        </authorList>
    </citation>
    <scope>NUCLEOTIDE SEQUENCE [GENOMIC DNA]</scope>
</reference>
<reference key="5">
    <citation type="submission" date="2003-02" db="EMBL/GenBank/DDBJ databases">
        <title>cDNA clones of human proteins involved in signal transduction sequenced by the Guthrie cDNA resource center (www.cdna.org).</title>
        <authorList>
            <person name="Warren C.N."/>
            <person name="Aronstam R.S."/>
            <person name="Sharma S.V."/>
        </authorList>
    </citation>
    <scope>NUCLEOTIDE SEQUENCE [LARGE SCALE MRNA]</scope>
    <source>
        <tissue>Placenta</tissue>
    </source>
</reference>
<reference key="6">
    <citation type="journal article" date="2004" name="Genome Res.">
        <title>The status, quality, and expansion of the NIH full-length cDNA project: the Mammalian Gene Collection (MGC).</title>
        <authorList>
            <consortium name="The MGC Project Team"/>
        </authorList>
    </citation>
    <scope>NUCLEOTIDE SEQUENCE [LARGE SCALE MRNA]</scope>
    <source>
        <tissue>Pancreas</tissue>
    </source>
</reference>
<reference key="7">
    <citation type="journal article" date="2002" name="Eur. J. Biochem.">
        <title>Investigation of a functional requirement for isoprenylation by the human prostacyclin receptor.</title>
        <authorList>
            <person name="Miggin S.M."/>
            <person name="Lawler O.A."/>
            <person name="Kinsella B.T."/>
        </authorList>
    </citation>
    <scope>ISOPRENYLATION AT CYS-383</scope>
    <scope>MUTAGENESIS OF CYS-383</scope>
</reference>
<reference key="8">
    <citation type="journal article" date="2003" name="J. Biol. Chem.">
        <title>Palmitoylation of the human prostacyclin receptor. Functional implications of palmitoylation and isoprenylation.</title>
        <authorList>
            <person name="Miggin S.M."/>
            <person name="Lawler O.A."/>
            <person name="Kinsella B.T."/>
        </authorList>
    </citation>
    <scope>RETRACTED PAPER</scope>
</reference>
<reference key="9">
    <citation type="journal article" date="2016" name="J. Biol. Chem.">
        <authorList>
            <person name="Miggin S.M."/>
            <person name="Lawler O.A."/>
            <person name="Kinsella B.T."/>
        </authorList>
    </citation>
    <scope>RETRACTION NOTICE OF PUBMED:12488443</scope>
</reference>
<reference key="10">
    <citation type="journal article" date="2004" name="Eur. J. Pharmacol.">
        <title>Role of extracellular cysteine residues in dimerization/oligomerization of the human prostacyclin receptor.</title>
        <authorList>
            <person name="Giguere V."/>
            <person name="Gallant M.A."/>
            <person name="de Brum-Fernandes A.J."/>
            <person name="Parent J.-L."/>
        </authorList>
    </citation>
    <scope>DISULFIDE BONDS</scope>
</reference>
<evidence type="ECO:0000250" key="1"/>
<evidence type="ECO:0000255" key="2"/>
<evidence type="ECO:0000255" key="3">
    <source>
        <dbReference type="PROSITE-ProRule" id="PRU00521"/>
    </source>
</evidence>
<evidence type="ECO:0000256" key="4">
    <source>
        <dbReference type="SAM" id="MobiDB-lite"/>
    </source>
</evidence>
<evidence type="ECO:0000269" key="5">
    <source>
    </source>
</evidence>
<evidence type="ECO:0000269" key="6">
    <source>
    </source>
</evidence>
<evidence type="ECO:0000269" key="7">
    <source>
    </source>
</evidence>
<evidence type="ECO:0000305" key="8"/>
<evidence type="ECO:0000305" key="9">
    <source>
    </source>
</evidence>
<evidence type="ECO:0007829" key="10">
    <source>
        <dbReference type="PDB" id="8X79"/>
    </source>
</evidence>
<feature type="chain" id="PRO_0000070075" description="Prostacyclin receptor">
    <location>
        <begin position="1"/>
        <end position="383"/>
    </location>
</feature>
<feature type="propeptide" id="PRO_0000240004" description="Removed in mature form" evidence="2">
    <location>
        <begin position="384"/>
        <end position="386"/>
    </location>
</feature>
<feature type="topological domain" description="Extracellular" evidence="2">
    <location>
        <begin position="1"/>
        <end position="16"/>
    </location>
</feature>
<feature type="transmembrane region" description="Helical; Name=1" evidence="2">
    <location>
        <begin position="17"/>
        <end position="38"/>
    </location>
</feature>
<feature type="topological domain" description="Cytoplasmic" evidence="2">
    <location>
        <begin position="39"/>
        <end position="51"/>
    </location>
</feature>
<feature type="transmembrane region" description="Helical; Name=2" evidence="2">
    <location>
        <begin position="52"/>
        <end position="76"/>
    </location>
</feature>
<feature type="topological domain" description="Extracellular" evidence="2">
    <location>
        <begin position="77"/>
        <end position="94"/>
    </location>
</feature>
<feature type="transmembrane region" description="Helical; Name=3" evidence="2">
    <location>
        <begin position="95"/>
        <end position="115"/>
    </location>
</feature>
<feature type="topological domain" description="Cytoplasmic" evidence="2">
    <location>
        <begin position="116"/>
        <end position="134"/>
    </location>
</feature>
<feature type="transmembrane region" description="Helical; Name=4" evidence="2">
    <location>
        <begin position="135"/>
        <end position="158"/>
    </location>
</feature>
<feature type="topological domain" description="Extracellular" evidence="2">
    <location>
        <begin position="159"/>
        <end position="181"/>
    </location>
</feature>
<feature type="transmembrane region" description="Helical; Name=5" evidence="2">
    <location>
        <begin position="182"/>
        <end position="208"/>
    </location>
</feature>
<feature type="topological domain" description="Cytoplasmic" evidence="2">
    <location>
        <begin position="209"/>
        <end position="235"/>
    </location>
</feature>
<feature type="transmembrane region" description="Helical; Name=6" evidence="2">
    <location>
        <begin position="236"/>
        <end position="260"/>
    </location>
</feature>
<feature type="topological domain" description="Extracellular" evidence="2">
    <location>
        <begin position="261"/>
        <end position="274"/>
    </location>
</feature>
<feature type="transmembrane region" description="Helical; Name=7" evidence="2">
    <location>
        <begin position="275"/>
        <end position="295"/>
    </location>
</feature>
<feature type="topological domain" description="Cytoplasmic" evidence="2">
    <location>
        <begin position="296"/>
        <end position="386"/>
    </location>
</feature>
<feature type="region of interest" description="Disordered" evidence="4">
    <location>
        <begin position="322"/>
        <end position="376"/>
    </location>
</feature>
<feature type="compositionally biased region" description="Polar residues" evidence="4">
    <location>
        <begin position="363"/>
        <end position="376"/>
    </location>
</feature>
<feature type="modified residue" description="Cysteine methyl ester" evidence="8">
    <location>
        <position position="383"/>
    </location>
</feature>
<feature type="lipid moiety-binding region" description="S-farnesyl cysteine" evidence="5">
    <location>
        <position position="383"/>
    </location>
</feature>
<feature type="glycosylation site" description="N-linked (GlcNAc...) asparagine" evidence="2">
    <location>
        <position position="7"/>
    </location>
</feature>
<feature type="disulfide bond" evidence="3 7">
    <location>
        <begin position="5"/>
        <end position="165"/>
    </location>
</feature>
<feature type="disulfide bond" evidence="3 7">
    <location>
        <begin position="92"/>
        <end position="170"/>
    </location>
</feature>
<feature type="sequence variant" id="VAR_024260" description="In dbSNP:rs2229127.">
    <original>V</original>
    <variation>M</variation>
    <location>
        <position position="25"/>
    </location>
</feature>
<feature type="sequence variant" id="VAR_061226" description="In dbSNP:rs28590598.">
    <original>S</original>
    <variation>W</variation>
    <location>
        <position position="319"/>
    </location>
</feature>
<feature type="mutagenesis site" description="Abolishes isoprenylation." evidence="5">
    <original>C</original>
    <variation>S</variation>
    <location>
        <position position="383"/>
    </location>
</feature>
<feature type="helix" evidence="10">
    <location>
        <begin position="18"/>
        <end position="38"/>
    </location>
</feature>
<feature type="strand" evidence="10">
    <location>
        <begin position="42"/>
        <end position="44"/>
    </location>
</feature>
<feature type="helix" evidence="10">
    <location>
        <begin position="48"/>
        <end position="77"/>
    </location>
</feature>
<feature type="turn" evidence="10">
    <location>
        <begin position="81"/>
        <end position="87"/>
    </location>
</feature>
<feature type="helix" evidence="10">
    <location>
        <begin position="90"/>
        <end position="121"/>
    </location>
</feature>
<feature type="helix" evidence="10">
    <location>
        <begin position="124"/>
        <end position="129"/>
    </location>
</feature>
<feature type="helix" evidence="10">
    <location>
        <begin position="132"/>
        <end position="152"/>
    </location>
</feature>
<feature type="helix" evidence="10">
    <location>
        <begin position="154"/>
        <end position="156"/>
    </location>
</feature>
<feature type="strand" evidence="10">
    <location>
        <begin position="161"/>
        <end position="163"/>
    </location>
</feature>
<feature type="strand" evidence="10">
    <location>
        <begin position="165"/>
        <end position="168"/>
    </location>
</feature>
<feature type="strand" evidence="10">
    <location>
        <begin position="170"/>
        <end position="172"/>
    </location>
</feature>
<feature type="helix" evidence="10">
    <location>
        <begin position="179"/>
        <end position="220"/>
    </location>
</feature>
<feature type="helix" evidence="10">
    <location>
        <begin position="233"/>
        <end position="264"/>
    </location>
</feature>
<feature type="helix" evidence="10">
    <location>
        <begin position="275"/>
        <end position="292"/>
    </location>
</feature>
<feature type="turn" evidence="10">
    <location>
        <begin position="293"/>
        <end position="295"/>
    </location>
</feature>
<feature type="helix" evidence="10">
    <location>
        <begin position="297"/>
        <end position="312"/>
    </location>
</feature>
<name>PI2R_HUMAN</name>
<proteinExistence type="evidence at protein level"/>
<dbReference type="EMBL" id="L29016">
    <property type="protein sequence ID" value="AAA36448.1"/>
    <property type="molecule type" value="mRNA"/>
</dbReference>
<dbReference type="EMBL" id="D25418">
    <property type="protein sequence ID" value="BAA05008.1"/>
    <property type="molecule type" value="mRNA"/>
</dbReference>
<dbReference type="EMBL" id="D29634">
    <property type="protein sequence ID" value="BAA06110.1"/>
    <property type="molecule type" value="mRNA"/>
</dbReference>
<dbReference type="EMBL" id="D38127">
    <property type="protein sequence ID" value="BAA07325.1"/>
    <property type="molecule type" value="Genomic_DNA"/>
</dbReference>
<dbReference type="EMBL" id="AY242134">
    <property type="protein sequence ID" value="AAO92301.1"/>
    <property type="molecule type" value="mRNA"/>
</dbReference>
<dbReference type="EMBL" id="BC075814">
    <property type="protein sequence ID" value="AAH75814.1"/>
    <property type="molecule type" value="mRNA"/>
</dbReference>
<dbReference type="CCDS" id="CCDS12686.1"/>
<dbReference type="PIR" id="A57066">
    <property type="entry name" value="A57066"/>
</dbReference>
<dbReference type="RefSeq" id="NP_000951.1">
    <property type="nucleotide sequence ID" value="NM_000960.4"/>
</dbReference>
<dbReference type="PDB" id="8X79">
    <property type="method" value="EM"/>
    <property type="resolution" value="2.41 A"/>
    <property type="chains" value="R=1-386"/>
</dbReference>
<dbReference type="PDB" id="8X7A">
    <property type="method" value="EM"/>
    <property type="resolution" value="2.56 A"/>
    <property type="chains" value="R=1-386"/>
</dbReference>
<dbReference type="PDBsum" id="8X79"/>
<dbReference type="PDBsum" id="8X7A"/>
<dbReference type="EMDB" id="EMD-38095"/>
<dbReference type="EMDB" id="EMD-38096"/>
<dbReference type="SMR" id="P43119"/>
<dbReference type="BioGRID" id="111711">
    <property type="interactions" value="222"/>
</dbReference>
<dbReference type="CORUM" id="P43119"/>
<dbReference type="FunCoup" id="P43119">
    <property type="interactions" value="928"/>
</dbReference>
<dbReference type="IntAct" id="P43119">
    <property type="interactions" value="57"/>
</dbReference>
<dbReference type="STRING" id="9606.ENSP00000291294"/>
<dbReference type="BindingDB" id="P43119"/>
<dbReference type="ChEMBL" id="CHEMBL1995"/>
<dbReference type="DrugBank" id="DB05229">
    <property type="generic name" value="Beraprost"/>
</dbReference>
<dbReference type="DrugBank" id="DB01160">
    <property type="generic name" value="Dinoprost tromethamine"/>
</dbReference>
<dbReference type="DrugBank" id="DB01240">
    <property type="generic name" value="Epoprostenol"/>
</dbReference>
<dbReference type="DrugBank" id="DB18464">
    <property type="generic name" value="Esuberaprost"/>
</dbReference>
<dbReference type="DrugBank" id="DB01088">
    <property type="generic name" value="Iloprost"/>
</dbReference>
<dbReference type="DrugBank" id="DB11629">
    <property type="generic name" value="Laropiprant"/>
</dbReference>
<dbReference type="DrugBank" id="DB00929">
    <property type="generic name" value="Misoprostol"/>
</dbReference>
<dbReference type="DrugBank" id="DB12462">
    <property type="generic name" value="Ralinepag"/>
</dbReference>
<dbReference type="DrugBank" id="DB11362">
    <property type="generic name" value="Selexipag"/>
</dbReference>
<dbReference type="DrugBank" id="DB00374">
    <property type="generic name" value="Treprostinil"/>
</dbReference>
<dbReference type="DrugCentral" id="P43119"/>
<dbReference type="GuidetoPHARMACOLOGY" id="345"/>
<dbReference type="GlyCosmos" id="P43119">
    <property type="glycosylation" value="1 site, No reported glycans"/>
</dbReference>
<dbReference type="GlyGen" id="P43119">
    <property type="glycosylation" value="7 sites"/>
</dbReference>
<dbReference type="iPTMnet" id="P43119"/>
<dbReference type="PhosphoSitePlus" id="P43119"/>
<dbReference type="SwissPalm" id="P43119"/>
<dbReference type="BioMuta" id="PTGIR"/>
<dbReference type="DMDM" id="1172500"/>
<dbReference type="MassIVE" id="P43119"/>
<dbReference type="PaxDb" id="9606-ENSP00000291294"/>
<dbReference type="PeptideAtlas" id="P43119"/>
<dbReference type="ProteomicsDB" id="55588"/>
<dbReference type="Antibodypedia" id="18117">
    <property type="antibodies" value="256 antibodies from 29 providers"/>
</dbReference>
<dbReference type="DNASU" id="5739"/>
<dbReference type="Ensembl" id="ENST00000291294.7">
    <property type="protein sequence ID" value="ENSP00000291294.1"/>
    <property type="gene ID" value="ENSG00000160013.10"/>
</dbReference>
<dbReference type="GeneID" id="5739"/>
<dbReference type="KEGG" id="hsa:5739"/>
<dbReference type="MANE-Select" id="ENST00000291294.7">
    <property type="protein sequence ID" value="ENSP00000291294.1"/>
    <property type="RefSeq nucleotide sequence ID" value="NM_000960.4"/>
    <property type="RefSeq protein sequence ID" value="NP_000951.1"/>
</dbReference>
<dbReference type="UCSC" id="uc002pex.4">
    <property type="organism name" value="human"/>
</dbReference>
<dbReference type="AGR" id="HGNC:9602"/>
<dbReference type="CTD" id="5739"/>
<dbReference type="DisGeNET" id="5739"/>
<dbReference type="GeneCards" id="PTGIR"/>
<dbReference type="HGNC" id="HGNC:9602">
    <property type="gene designation" value="PTGIR"/>
</dbReference>
<dbReference type="HPA" id="ENSG00000160013">
    <property type="expression patterns" value="Tissue enhanced (lung)"/>
</dbReference>
<dbReference type="MIM" id="600022">
    <property type="type" value="gene"/>
</dbReference>
<dbReference type="neXtProt" id="NX_P43119"/>
<dbReference type="OpenTargets" id="ENSG00000160013"/>
<dbReference type="PharmGKB" id="PA291"/>
<dbReference type="VEuPathDB" id="HostDB:ENSG00000160013"/>
<dbReference type="eggNOG" id="KOG3656">
    <property type="taxonomic scope" value="Eukaryota"/>
</dbReference>
<dbReference type="GeneTree" id="ENSGT01050000244902"/>
<dbReference type="HOGENOM" id="CLU_045991_0_1_1"/>
<dbReference type="InParanoid" id="P43119"/>
<dbReference type="OMA" id="IHPFCGD"/>
<dbReference type="OrthoDB" id="5959154at2759"/>
<dbReference type="PAN-GO" id="P43119">
    <property type="GO annotations" value="6 GO annotations based on evolutionary models"/>
</dbReference>
<dbReference type="PhylomeDB" id="P43119"/>
<dbReference type="TreeFam" id="TF324982"/>
<dbReference type="PathwayCommons" id="P43119"/>
<dbReference type="Reactome" id="R-HSA-391908">
    <property type="pathway name" value="Prostanoid ligand receptors"/>
</dbReference>
<dbReference type="Reactome" id="R-HSA-392851">
    <property type="pathway name" value="Prostacyclin signalling through prostacyclin receptor"/>
</dbReference>
<dbReference type="Reactome" id="R-HSA-418555">
    <property type="pathway name" value="G alpha (s) signalling events"/>
</dbReference>
<dbReference type="SABIO-RK" id="P43119"/>
<dbReference type="SignaLink" id="P43119"/>
<dbReference type="SIGNOR" id="P43119"/>
<dbReference type="BioGRID-ORCS" id="5739">
    <property type="hits" value="15 hits in 1162 CRISPR screens"/>
</dbReference>
<dbReference type="ChiTaRS" id="PTGIR">
    <property type="organism name" value="human"/>
</dbReference>
<dbReference type="GeneWiki" id="Prostacyclin_receptor"/>
<dbReference type="GenomeRNAi" id="5739"/>
<dbReference type="Pharos" id="P43119">
    <property type="development level" value="Tclin"/>
</dbReference>
<dbReference type="PRO" id="PR:P43119"/>
<dbReference type="Proteomes" id="UP000005640">
    <property type="component" value="Chromosome 19"/>
</dbReference>
<dbReference type="RNAct" id="P43119">
    <property type="molecule type" value="protein"/>
</dbReference>
<dbReference type="Bgee" id="ENSG00000160013">
    <property type="expression patterns" value="Expressed in ascending aorta and 118 other cell types or tissues"/>
</dbReference>
<dbReference type="ExpressionAtlas" id="P43119">
    <property type="expression patterns" value="baseline and differential"/>
</dbReference>
<dbReference type="GO" id="GO:0005829">
    <property type="term" value="C:cytosol"/>
    <property type="evidence" value="ECO:0000314"/>
    <property type="project" value="BHF-UCL"/>
</dbReference>
<dbReference type="GO" id="GO:0005886">
    <property type="term" value="C:plasma membrane"/>
    <property type="evidence" value="ECO:0000314"/>
    <property type="project" value="BHF-UCL"/>
</dbReference>
<dbReference type="GO" id="GO:0005085">
    <property type="term" value="F:guanyl-nucleotide exchange factor activity"/>
    <property type="evidence" value="ECO:0000304"/>
    <property type="project" value="Reactome"/>
</dbReference>
<dbReference type="GO" id="GO:0016501">
    <property type="term" value="F:prostacyclin receptor activity"/>
    <property type="evidence" value="ECO:0000318"/>
    <property type="project" value="GO_Central"/>
</dbReference>
<dbReference type="GO" id="GO:0007189">
    <property type="term" value="P:adenylate cyclase-activating G protein-coupled receptor signaling pathway"/>
    <property type="evidence" value="ECO:0000315"/>
    <property type="project" value="BHF-UCL"/>
</dbReference>
<dbReference type="GO" id="GO:0007267">
    <property type="term" value="P:cell-cell signaling"/>
    <property type="evidence" value="ECO:0000304"/>
    <property type="project" value="ProtInc"/>
</dbReference>
<dbReference type="GO" id="GO:0007187">
    <property type="term" value="P:G protein-coupled receptor signaling pathway, coupled to cyclic nucleotide second messenger"/>
    <property type="evidence" value="ECO:0000304"/>
    <property type="project" value="ProtInc"/>
</dbReference>
<dbReference type="GO" id="GO:0006954">
    <property type="term" value="P:inflammatory response"/>
    <property type="evidence" value="ECO:0000318"/>
    <property type="project" value="GO_Central"/>
</dbReference>
<dbReference type="GO" id="GO:0010642">
    <property type="term" value="P:negative regulation of platelet-derived growth factor receptor signaling pathway"/>
    <property type="evidence" value="ECO:0000250"/>
    <property type="project" value="BHF-UCL"/>
</dbReference>
<dbReference type="GO" id="GO:0048662">
    <property type="term" value="P:negative regulation of smooth muscle cell proliferation"/>
    <property type="evidence" value="ECO:0000314"/>
    <property type="project" value="BHF-UCL"/>
</dbReference>
<dbReference type="GO" id="GO:0007204">
    <property type="term" value="P:positive regulation of cytosolic calcium ion concentration"/>
    <property type="evidence" value="ECO:0000318"/>
    <property type="project" value="GO_Central"/>
</dbReference>
<dbReference type="GO" id="GO:0032496">
    <property type="term" value="P:response to lipopolysaccharide"/>
    <property type="evidence" value="ECO:0007669"/>
    <property type="project" value="Ensembl"/>
</dbReference>
<dbReference type="FunFam" id="1.20.1070.10:FF:000198">
    <property type="entry name" value="Prostaglandin I2 receptor"/>
    <property type="match status" value="1"/>
</dbReference>
<dbReference type="Gene3D" id="1.20.1070.10">
    <property type="entry name" value="Rhodopsin 7-helix transmembrane proteins"/>
    <property type="match status" value="1"/>
</dbReference>
<dbReference type="InterPro" id="IPR000276">
    <property type="entry name" value="GPCR_Rhodpsn"/>
</dbReference>
<dbReference type="InterPro" id="IPR017452">
    <property type="entry name" value="GPCR_Rhodpsn_7TM"/>
</dbReference>
<dbReference type="InterPro" id="IPR008365">
    <property type="entry name" value="Prostanoid_rcpt"/>
</dbReference>
<dbReference type="InterPro" id="IPR000370">
    <property type="entry name" value="Prostglndn_IP_rcpt"/>
</dbReference>
<dbReference type="PANTHER" id="PTHR11866">
    <property type="entry name" value="G-PROTEIN COUPLED RECEPTOR FAMILY 1 MEMBER"/>
    <property type="match status" value="1"/>
</dbReference>
<dbReference type="PANTHER" id="PTHR11866:SF7">
    <property type="entry name" value="PROSTACYCLIN RECEPTOR"/>
    <property type="match status" value="1"/>
</dbReference>
<dbReference type="Pfam" id="PF00001">
    <property type="entry name" value="7tm_1"/>
    <property type="match status" value="1"/>
</dbReference>
<dbReference type="PRINTS" id="PR01788">
    <property type="entry name" value="PROSTANOIDR"/>
</dbReference>
<dbReference type="PRINTS" id="PR00856">
    <property type="entry name" value="PRSTNOIDIPR"/>
</dbReference>
<dbReference type="SUPFAM" id="SSF81321">
    <property type="entry name" value="Family A G protein-coupled receptor-like"/>
    <property type="match status" value="1"/>
</dbReference>
<dbReference type="PROSITE" id="PS00237">
    <property type="entry name" value="G_PROTEIN_RECEP_F1_1"/>
    <property type="match status" value="1"/>
</dbReference>
<dbReference type="PROSITE" id="PS50262">
    <property type="entry name" value="G_PROTEIN_RECEP_F1_2"/>
    <property type="match status" value="1"/>
</dbReference>
<accession>P43119</accession>
<sequence>MADSCRNLTYVRGSVGPATSTLMFVAGVVGNGLALGILSARRPARPSAFAVLVTGLAATDLLGTSFLSPAVFVAYARNSSLLGLARGGPALCDAFAFAMTFFGLASMLILFAMAVERCLALSHPYLYAQLDGPRCARLALPAIYAFCVLFCALPLLGLGQHQQYCPGSWCFLRMRWAQPGGAAFSLAYAGLVALLVAAIFLCNGSVTLSLCRMYRQQKRHQGSLGPRPRTGEDEVDHLILLALMTVVMAVCSLPLTIRCFTQAVAPDSSSEMGDLLAFRFYAFNPILDPWVFILFRKAVFQRLKLWVCCLCLGPAHGDSQTPLSQLASGRRDPRAPSAPVGKEGSCVPLSAWGEGQVEPLPPTQQSSGSAVGTSSKAEASVACSLC</sequence>